<sequence length="317" mass="34525">MTPAPKSSFVLAHRHLLGIEGLSAADITGLLDLSEEYVELNRQIDKKRTSLRGRTQVNLFFEASTRTQSSFEIAGKRLGADVMNMSVSSSSMRKGETLIDTAVTLNAMHPDLLVVRHHASGAVELLARKVDGSVVNAGDGAHEHPTQALLDALTIRRNKGRLEGLTIAICGDVMHSRVARSNILLLNIMGARVRVVAPSTLLPPGIERMGVEVARDMREGLNGADIVMMLRLQRERMNGSFVPSSQEYFQYFGLDQKKLGYAKPDALVMHPGPMNRGVEIDSIVADGAQSLIREQVEMGVAVRMAVLEALARNLPNA</sequence>
<keyword id="KW-0665">Pyrimidine biosynthesis</keyword>
<keyword id="KW-0808">Transferase</keyword>
<accession>Q215Y5</accession>
<protein>
    <recommendedName>
        <fullName evidence="1">Aspartate carbamoyltransferase catalytic subunit</fullName>
        <ecNumber evidence="1">2.1.3.2</ecNumber>
    </recommendedName>
    <alternativeName>
        <fullName evidence="1">Aspartate transcarbamylase</fullName>
        <shortName evidence="1">ATCase</shortName>
    </alternativeName>
</protein>
<proteinExistence type="inferred from homology"/>
<name>PYRB_RHOPB</name>
<organism>
    <name type="scientific">Rhodopseudomonas palustris (strain BisB18)</name>
    <dbReference type="NCBI Taxonomy" id="316056"/>
    <lineage>
        <taxon>Bacteria</taxon>
        <taxon>Pseudomonadati</taxon>
        <taxon>Pseudomonadota</taxon>
        <taxon>Alphaproteobacteria</taxon>
        <taxon>Hyphomicrobiales</taxon>
        <taxon>Nitrobacteraceae</taxon>
        <taxon>Rhodopseudomonas</taxon>
    </lineage>
</organism>
<gene>
    <name evidence="1" type="primary">pyrB</name>
    <name type="ordered locus">RPC_2247</name>
</gene>
<evidence type="ECO:0000255" key="1">
    <source>
        <dbReference type="HAMAP-Rule" id="MF_00001"/>
    </source>
</evidence>
<dbReference type="EC" id="2.1.3.2" evidence="1"/>
<dbReference type="EMBL" id="CP000301">
    <property type="protein sequence ID" value="ABD87801.1"/>
    <property type="molecule type" value="Genomic_DNA"/>
</dbReference>
<dbReference type="SMR" id="Q215Y5"/>
<dbReference type="STRING" id="316056.RPC_2247"/>
<dbReference type="KEGG" id="rpc:RPC_2247"/>
<dbReference type="eggNOG" id="COG0540">
    <property type="taxonomic scope" value="Bacteria"/>
</dbReference>
<dbReference type="HOGENOM" id="CLU_043846_2_0_5"/>
<dbReference type="OrthoDB" id="9774690at2"/>
<dbReference type="UniPathway" id="UPA00070">
    <property type="reaction ID" value="UER00116"/>
</dbReference>
<dbReference type="GO" id="GO:0005829">
    <property type="term" value="C:cytosol"/>
    <property type="evidence" value="ECO:0007669"/>
    <property type="project" value="TreeGrafter"/>
</dbReference>
<dbReference type="GO" id="GO:0016597">
    <property type="term" value="F:amino acid binding"/>
    <property type="evidence" value="ECO:0007669"/>
    <property type="project" value="InterPro"/>
</dbReference>
<dbReference type="GO" id="GO:0004070">
    <property type="term" value="F:aspartate carbamoyltransferase activity"/>
    <property type="evidence" value="ECO:0007669"/>
    <property type="project" value="UniProtKB-UniRule"/>
</dbReference>
<dbReference type="GO" id="GO:0006207">
    <property type="term" value="P:'de novo' pyrimidine nucleobase biosynthetic process"/>
    <property type="evidence" value="ECO:0007669"/>
    <property type="project" value="InterPro"/>
</dbReference>
<dbReference type="GO" id="GO:0044205">
    <property type="term" value="P:'de novo' UMP biosynthetic process"/>
    <property type="evidence" value="ECO:0007669"/>
    <property type="project" value="UniProtKB-UniRule"/>
</dbReference>
<dbReference type="GO" id="GO:0006520">
    <property type="term" value="P:amino acid metabolic process"/>
    <property type="evidence" value="ECO:0007669"/>
    <property type="project" value="InterPro"/>
</dbReference>
<dbReference type="FunFam" id="3.40.50.1370:FF:000007">
    <property type="entry name" value="Aspartate carbamoyltransferase"/>
    <property type="match status" value="1"/>
</dbReference>
<dbReference type="Gene3D" id="3.40.50.1370">
    <property type="entry name" value="Aspartate/ornithine carbamoyltransferase"/>
    <property type="match status" value="2"/>
</dbReference>
<dbReference type="HAMAP" id="MF_00001">
    <property type="entry name" value="Asp_carb_tr"/>
    <property type="match status" value="1"/>
</dbReference>
<dbReference type="InterPro" id="IPR006132">
    <property type="entry name" value="Asp/Orn_carbamoyltranf_P-bd"/>
</dbReference>
<dbReference type="InterPro" id="IPR006130">
    <property type="entry name" value="Asp/Orn_carbamoylTrfase"/>
</dbReference>
<dbReference type="InterPro" id="IPR036901">
    <property type="entry name" value="Asp/Orn_carbamoylTrfase_sf"/>
</dbReference>
<dbReference type="InterPro" id="IPR002082">
    <property type="entry name" value="Asp_carbamoyltransf"/>
</dbReference>
<dbReference type="InterPro" id="IPR006131">
    <property type="entry name" value="Asp_carbamoyltransf_Asp/Orn-bd"/>
</dbReference>
<dbReference type="NCBIfam" id="TIGR00670">
    <property type="entry name" value="asp_carb_tr"/>
    <property type="match status" value="1"/>
</dbReference>
<dbReference type="NCBIfam" id="NF002032">
    <property type="entry name" value="PRK00856.1"/>
    <property type="match status" value="1"/>
</dbReference>
<dbReference type="PANTHER" id="PTHR45753:SF6">
    <property type="entry name" value="ASPARTATE CARBAMOYLTRANSFERASE"/>
    <property type="match status" value="1"/>
</dbReference>
<dbReference type="PANTHER" id="PTHR45753">
    <property type="entry name" value="ORNITHINE CARBAMOYLTRANSFERASE, MITOCHONDRIAL"/>
    <property type="match status" value="1"/>
</dbReference>
<dbReference type="Pfam" id="PF00185">
    <property type="entry name" value="OTCace"/>
    <property type="match status" value="1"/>
</dbReference>
<dbReference type="Pfam" id="PF02729">
    <property type="entry name" value="OTCace_N"/>
    <property type="match status" value="1"/>
</dbReference>
<dbReference type="PRINTS" id="PR00100">
    <property type="entry name" value="AOTCASE"/>
</dbReference>
<dbReference type="PRINTS" id="PR00101">
    <property type="entry name" value="ATCASE"/>
</dbReference>
<dbReference type="SUPFAM" id="SSF53671">
    <property type="entry name" value="Aspartate/ornithine carbamoyltransferase"/>
    <property type="match status" value="1"/>
</dbReference>
<dbReference type="PROSITE" id="PS00097">
    <property type="entry name" value="CARBAMOYLTRANSFERASE"/>
    <property type="match status" value="1"/>
</dbReference>
<reference key="1">
    <citation type="submission" date="2006-03" db="EMBL/GenBank/DDBJ databases">
        <title>Complete sequence of Rhodopseudomonas palustris BisB18.</title>
        <authorList>
            <consortium name="US DOE Joint Genome Institute"/>
            <person name="Copeland A."/>
            <person name="Lucas S."/>
            <person name="Lapidus A."/>
            <person name="Barry K."/>
            <person name="Detter J.C."/>
            <person name="Glavina del Rio T."/>
            <person name="Hammon N."/>
            <person name="Israni S."/>
            <person name="Dalin E."/>
            <person name="Tice H."/>
            <person name="Pitluck S."/>
            <person name="Chain P."/>
            <person name="Malfatti S."/>
            <person name="Shin M."/>
            <person name="Vergez L."/>
            <person name="Schmutz J."/>
            <person name="Larimer F."/>
            <person name="Land M."/>
            <person name="Hauser L."/>
            <person name="Pelletier D.A."/>
            <person name="Kyrpides N."/>
            <person name="Anderson I."/>
            <person name="Oda Y."/>
            <person name="Harwood C.S."/>
            <person name="Richardson P."/>
        </authorList>
    </citation>
    <scope>NUCLEOTIDE SEQUENCE [LARGE SCALE GENOMIC DNA]</scope>
    <source>
        <strain>BisB18</strain>
    </source>
</reference>
<comment type="function">
    <text evidence="1">Catalyzes the condensation of carbamoyl phosphate and aspartate to form carbamoyl aspartate and inorganic phosphate, the committed step in the de novo pyrimidine nucleotide biosynthesis pathway.</text>
</comment>
<comment type="catalytic activity">
    <reaction evidence="1">
        <text>carbamoyl phosphate + L-aspartate = N-carbamoyl-L-aspartate + phosphate + H(+)</text>
        <dbReference type="Rhea" id="RHEA:20013"/>
        <dbReference type="ChEBI" id="CHEBI:15378"/>
        <dbReference type="ChEBI" id="CHEBI:29991"/>
        <dbReference type="ChEBI" id="CHEBI:32814"/>
        <dbReference type="ChEBI" id="CHEBI:43474"/>
        <dbReference type="ChEBI" id="CHEBI:58228"/>
        <dbReference type="EC" id="2.1.3.2"/>
    </reaction>
</comment>
<comment type="pathway">
    <text evidence="1">Pyrimidine metabolism; UMP biosynthesis via de novo pathway; (S)-dihydroorotate from bicarbonate: step 2/3.</text>
</comment>
<comment type="subunit">
    <text evidence="1">Heterododecamer (2C3:3R2) of six catalytic PyrB chains organized as two trimers (C3), and six regulatory PyrI chains organized as three dimers (R2).</text>
</comment>
<comment type="similarity">
    <text evidence="1">Belongs to the aspartate/ornithine carbamoyltransferase superfamily. ATCase family.</text>
</comment>
<feature type="chain" id="PRO_0000301613" description="Aspartate carbamoyltransferase catalytic subunit">
    <location>
        <begin position="1"/>
        <end position="317"/>
    </location>
</feature>
<feature type="binding site" evidence="1">
    <location>
        <position position="66"/>
    </location>
    <ligand>
        <name>carbamoyl phosphate</name>
        <dbReference type="ChEBI" id="CHEBI:58228"/>
    </ligand>
</feature>
<feature type="binding site" evidence="1">
    <location>
        <position position="67"/>
    </location>
    <ligand>
        <name>carbamoyl phosphate</name>
        <dbReference type="ChEBI" id="CHEBI:58228"/>
    </ligand>
</feature>
<feature type="binding site" evidence="1">
    <location>
        <position position="94"/>
    </location>
    <ligand>
        <name>L-aspartate</name>
        <dbReference type="ChEBI" id="CHEBI:29991"/>
    </ligand>
</feature>
<feature type="binding site" evidence="1">
    <location>
        <position position="116"/>
    </location>
    <ligand>
        <name>carbamoyl phosphate</name>
        <dbReference type="ChEBI" id="CHEBI:58228"/>
    </ligand>
</feature>
<feature type="binding site" evidence="1">
    <location>
        <position position="144"/>
    </location>
    <ligand>
        <name>carbamoyl phosphate</name>
        <dbReference type="ChEBI" id="CHEBI:58228"/>
    </ligand>
</feature>
<feature type="binding site" evidence="1">
    <location>
        <position position="147"/>
    </location>
    <ligand>
        <name>carbamoyl phosphate</name>
        <dbReference type="ChEBI" id="CHEBI:58228"/>
    </ligand>
</feature>
<feature type="binding site" evidence="1">
    <location>
        <position position="177"/>
    </location>
    <ligand>
        <name>L-aspartate</name>
        <dbReference type="ChEBI" id="CHEBI:29991"/>
    </ligand>
</feature>
<feature type="binding site" evidence="1">
    <location>
        <position position="231"/>
    </location>
    <ligand>
        <name>L-aspartate</name>
        <dbReference type="ChEBI" id="CHEBI:29991"/>
    </ligand>
</feature>
<feature type="binding site" evidence="1">
    <location>
        <position position="272"/>
    </location>
    <ligand>
        <name>carbamoyl phosphate</name>
        <dbReference type="ChEBI" id="CHEBI:58228"/>
    </ligand>
</feature>
<feature type="binding site" evidence="1">
    <location>
        <position position="273"/>
    </location>
    <ligand>
        <name>carbamoyl phosphate</name>
        <dbReference type="ChEBI" id="CHEBI:58228"/>
    </ligand>
</feature>